<evidence type="ECO:0000305" key="1"/>
<accession>P45925</accession>
<comment type="similarity">
    <text evidence="1">To B.subtilis XkdI.</text>
</comment>
<reference key="1">
    <citation type="journal article" date="1995" name="Microbiology">
        <title>Complete nucleotide sequence of a skin element excised by DNA rearrangement during sporulation in Bacillus subtilis.</title>
        <authorList>
            <person name="Takemaru K."/>
            <person name="Mizuno M."/>
            <person name="Sato T."/>
            <person name="Takeuchi M."/>
            <person name="Kobayashi Y."/>
        </authorList>
    </citation>
    <scope>NUCLEOTIDE SEQUENCE [GENOMIC DNA]</scope>
    <source>
        <strain>168 / JH642</strain>
    </source>
</reference>
<reference key="2">
    <citation type="journal article" date="1996" name="Microbiology">
        <title>Systematic sequencing of the 283 kb 210 degrees-232 degrees region of the Bacillus subtilis genome containing the skin element and many sporulation genes.</title>
        <authorList>
            <person name="Mizuno M."/>
            <person name="Masuda S."/>
            <person name="Takemaru K."/>
            <person name="Hosono S."/>
            <person name="Sato T."/>
            <person name="Takeuchi M."/>
            <person name="Kobayashi Y."/>
        </authorList>
    </citation>
    <scope>NUCLEOTIDE SEQUENCE [GENOMIC DNA]</scope>
    <source>
        <strain>168 / JH642</strain>
    </source>
</reference>
<reference key="3">
    <citation type="journal article" date="1997" name="Nature">
        <title>The complete genome sequence of the Gram-positive bacterium Bacillus subtilis.</title>
        <authorList>
            <person name="Kunst F."/>
            <person name="Ogasawara N."/>
            <person name="Moszer I."/>
            <person name="Albertini A.M."/>
            <person name="Alloni G."/>
            <person name="Azevedo V."/>
            <person name="Bertero M.G."/>
            <person name="Bessieres P."/>
            <person name="Bolotin A."/>
            <person name="Borchert S."/>
            <person name="Borriss R."/>
            <person name="Boursier L."/>
            <person name="Brans A."/>
            <person name="Braun M."/>
            <person name="Brignell S.C."/>
            <person name="Bron S."/>
            <person name="Brouillet S."/>
            <person name="Bruschi C.V."/>
            <person name="Caldwell B."/>
            <person name="Capuano V."/>
            <person name="Carter N.M."/>
            <person name="Choi S.-K."/>
            <person name="Codani J.-J."/>
            <person name="Connerton I.F."/>
            <person name="Cummings N.J."/>
            <person name="Daniel R.A."/>
            <person name="Denizot F."/>
            <person name="Devine K.M."/>
            <person name="Duesterhoeft A."/>
            <person name="Ehrlich S.D."/>
            <person name="Emmerson P.T."/>
            <person name="Entian K.-D."/>
            <person name="Errington J."/>
            <person name="Fabret C."/>
            <person name="Ferrari E."/>
            <person name="Foulger D."/>
            <person name="Fritz C."/>
            <person name="Fujita M."/>
            <person name="Fujita Y."/>
            <person name="Fuma S."/>
            <person name="Galizzi A."/>
            <person name="Galleron N."/>
            <person name="Ghim S.-Y."/>
            <person name="Glaser P."/>
            <person name="Goffeau A."/>
            <person name="Golightly E.J."/>
            <person name="Grandi G."/>
            <person name="Guiseppi G."/>
            <person name="Guy B.J."/>
            <person name="Haga K."/>
            <person name="Haiech J."/>
            <person name="Harwood C.R."/>
            <person name="Henaut A."/>
            <person name="Hilbert H."/>
            <person name="Holsappel S."/>
            <person name="Hosono S."/>
            <person name="Hullo M.-F."/>
            <person name="Itaya M."/>
            <person name="Jones L.-M."/>
            <person name="Joris B."/>
            <person name="Karamata D."/>
            <person name="Kasahara Y."/>
            <person name="Klaerr-Blanchard M."/>
            <person name="Klein C."/>
            <person name="Kobayashi Y."/>
            <person name="Koetter P."/>
            <person name="Koningstein G."/>
            <person name="Krogh S."/>
            <person name="Kumano M."/>
            <person name="Kurita K."/>
            <person name="Lapidus A."/>
            <person name="Lardinois S."/>
            <person name="Lauber J."/>
            <person name="Lazarevic V."/>
            <person name="Lee S.-M."/>
            <person name="Levine A."/>
            <person name="Liu H."/>
            <person name="Masuda S."/>
            <person name="Mauel C."/>
            <person name="Medigue C."/>
            <person name="Medina N."/>
            <person name="Mellado R.P."/>
            <person name="Mizuno M."/>
            <person name="Moestl D."/>
            <person name="Nakai S."/>
            <person name="Noback M."/>
            <person name="Noone D."/>
            <person name="O'Reilly M."/>
            <person name="Ogawa K."/>
            <person name="Ogiwara A."/>
            <person name="Oudega B."/>
            <person name="Park S.-H."/>
            <person name="Parro V."/>
            <person name="Pohl T.M."/>
            <person name="Portetelle D."/>
            <person name="Porwollik S."/>
            <person name="Prescott A.M."/>
            <person name="Presecan E."/>
            <person name="Pujic P."/>
            <person name="Purnelle B."/>
            <person name="Rapoport G."/>
            <person name="Rey M."/>
            <person name="Reynolds S."/>
            <person name="Rieger M."/>
            <person name="Rivolta C."/>
            <person name="Rocha E."/>
            <person name="Roche B."/>
            <person name="Rose M."/>
            <person name="Sadaie Y."/>
            <person name="Sato T."/>
            <person name="Scanlan E."/>
            <person name="Schleich S."/>
            <person name="Schroeter R."/>
            <person name="Scoffone F."/>
            <person name="Sekiguchi J."/>
            <person name="Sekowska A."/>
            <person name="Seror S.J."/>
            <person name="Serror P."/>
            <person name="Shin B.-S."/>
            <person name="Soldo B."/>
            <person name="Sorokin A."/>
            <person name="Tacconi E."/>
            <person name="Takagi T."/>
            <person name="Takahashi H."/>
            <person name="Takemaru K."/>
            <person name="Takeuchi M."/>
            <person name="Tamakoshi A."/>
            <person name="Tanaka T."/>
            <person name="Terpstra P."/>
            <person name="Tognoni A."/>
            <person name="Tosato V."/>
            <person name="Uchiyama S."/>
            <person name="Vandenbol M."/>
            <person name="Vannier F."/>
            <person name="Vassarotti A."/>
            <person name="Viari A."/>
            <person name="Wambutt R."/>
            <person name="Wedler E."/>
            <person name="Wedler H."/>
            <person name="Weitzenegger T."/>
            <person name="Winters P."/>
            <person name="Wipat A."/>
            <person name="Yamamoto H."/>
            <person name="Yamane K."/>
            <person name="Yasumoto K."/>
            <person name="Yata K."/>
            <person name="Yoshida K."/>
            <person name="Yoshikawa H.-F."/>
            <person name="Zumstein E."/>
            <person name="Yoshikawa H."/>
            <person name="Danchin A."/>
        </authorList>
    </citation>
    <scope>NUCLEOTIDE SEQUENCE [LARGE SCALE GENOMIC DNA]</scope>
    <source>
        <strain>168</strain>
    </source>
</reference>
<reference key="4">
    <citation type="journal article" date="1995" name="Gene">
        <title>Analysis of a Bacillus subtilis genome fragment using a co-operative computer system prototype.</title>
        <authorList>
            <person name="Medigue C."/>
            <person name="Moszer I."/>
            <person name="Viari A."/>
            <person name="Danchin A."/>
        </authorList>
    </citation>
    <scope>IDENTIFICATION</scope>
</reference>
<organism>
    <name type="scientific">Bacillus subtilis (strain 168)</name>
    <dbReference type="NCBI Taxonomy" id="224308"/>
    <lineage>
        <taxon>Bacteria</taxon>
        <taxon>Bacillati</taxon>
        <taxon>Bacillota</taxon>
        <taxon>Bacilli</taxon>
        <taxon>Bacillales</taxon>
        <taxon>Bacillaceae</taxon>
        <taxon>Bacillus</taxon>
    </lineage>
</organism>
<feature type="chain" id="PRO_0000049760" description="Uncharacterized protein YqbI">
    <location>
        <begin position="1"/>
        <end position="167"/>
    </location>
</feature>
<sequence length="167" mass="19857">MKIRGLDQFIQSLDRASRGGLKRKYEQWLESMGFEFLDIIQDEIIRTKTVDTRRLLNSFQKGDQDNIFSMTEGSLKLDVGTNLDYASYVNDGHFTIDPSKNQDRRWVPGRWKGDRFEYDPAEKNSGMLLKFRWVDGSGFWDNAMAIFQLMFERSLERKLQQWIYEEF</sequence>
<gene>
    <name type="primary">yqbI</name>
    <name type="ordered locus">BSU26100</name>
</gene>
<name>YQBI_BACSU</name>
<proteinExistence type="predicted"/>
<dbReference type="EMBL" id="D32216">
    <property type="protein sequence ID" value="BAA06941.1"/>
    <property type="molecule type" value="Genomic_DNA"/>
</dbReference>
<dbReference type="EMBL" id="D84432">
    <property type="protein sequence ID" value="BAA12404.1"/>
    <property type="molecule type" value="Genomic_DNA"/>
</dbReference>
<dbReference type="EMBL" id="AL009126">
    <property type="protein sequence ID" value="CAB14551.1"/>
    <property type="molecule type" value="Genomic_DNA"/>
</dbReference>
<dbReference type="PIR" id="D69947">
    <property type="entry name" value="D69947"/>
</dbReference>
<dbReference type="RefSeq" id="NP_390487.1">
    <property type="nucleotide sequence ID" value="NC_000964.3"/>
</dbReference>
<dbReference type="RefSeq" id="WP_003246050.1">
    <property type="nucleotide sequence ID" value="NZ_OZ025638.1"/>
</dbReference>
<dbReference type="FunCoup" id="P45925">
    <property type="interactions" value="183"/>
</dbReference>
<dbReference type="STRING" id="224308.BSU26100"/>
<dbReference type="PaxDb" id="224308-BSU26100"/>
<dbReference type="EnsemblBacteria" id="CAB14551">
    <property type="protein sequence ID" value="CAB14551"/>
    <property type="gene ID" value="BSU_26100"/>
</dbReference>
<dbReference type="GeneID" id="937737"/>
<dbReference type="KEGG" id="bsu:BSU26100"/>
<dbReference type="PATRIC" id="fig|224308.179.peg.2836"/>
<dbReference type="eggNOG" id="ENOG5032GN3">
    <property type="taxonomic scope" value="Bacteria"/>
</dbReference>
<dbReference type="InParanoid" id="P45925"/>
<dbReference type="OrthoDB" id="2871348at2"/>
<dbReference type="BioCyc" id="BSUB:BSU26100-MONOMER"/>
<dbReference type="Proteomes" id="UP000001570">
    <property type="component" value="Chromosome"/>
</dbReference>
<dbReference type="InterPro" id="IPR010064">
    <property type="entry name" value="HK97-gp10_tail"/>
</dbReference>
<dbReference type="Pfam" id="PF04883">
    <property type="entry name" value="HK97-gp10_like"/>
    <property type="match status" value="1"/>
</dbReference>
<protein>
    <recommendedName>
        <fullName>Uncharacterized protein YqbI</fullName>
    </recommendedName>
</protein>
<keyword id="KW-1185">Reference proteome</keyword>